<name>SYH_MESFL</name>
<dbReference type="EC" id="6.1.1.21" evidence="1"/>
<dbReference type="EMBL" id="AE017263">
    <property type="protein sequence ID" value="AAT75724.1"/>
    <property type="molecule type" value="Genomic_DNA"/>
</dbReference>
<dbReference type="RefSeq" id="YP_053608.1">
    <property type="nucleotide sequence ID" value="NC_006055.1"/>
</dbReference>
<dbReference type="SMR" id="Q6F199"/>
<dbReference type="STRING" id="265311.Mfl366"/>
<dbReference type="PaxDb" id="265311-Mfl366"/>
<dbReference type="EnsemblBacteria" id="AAT75724">
    <property type="protein sequence ID" value="AAT75724"/>
    <property type="gene ID" value="Mfl366"/>
</dbReference>
<dbReference type="KEGG" id="mfl:Mfl366"/>
<dbReference type="PATRIC" id="fig|265311.5.peg.365"/>
<dbReference type="eggNOG" id="COG0124">
    <property type="taxonomic scope" value="Bacteria"/>
</dbReference>
<dbReference type="HOGENOM" id="CLU_025113_1_1_14"/>
<dbReference type="OrthoDB" id="9800814at2"/>
<dbReference type="Proteomes" id="UP000006647">
    <property type="component" value="Chromosome"/>
</dbReference>
<dbReference type="GO" id="GO:0005737">
    <property type="term" value="C:cytoplasm"/>
    <property type="evidence" value="ECO:0007669"/>
    <property type="project" value="UniProtKB-SubCell"/>
</dbReference>
<dbReference type="GO" id="GO:0005524">
    <property type="term" value="F:ATP binding"/>
    <property type="evidence" value="ECO:0007669"/>
    <property type="project" value="UniProtKB-UniRule"/>
</dbReference>
<dbReference type="GO" id="GO:0004821">
    <property type="term" value="F:histidine-tRNA ligase activity"/>
    <property type="evidence" value="ECO:0007669"/>
    <property type="project" value="UniProtKB-UniRule"/>
</dbReference>
<dbReference type="GO" id="GO:0006427">
    <property type="term" value="P:histidyl-tRNA aminoacylation"/>
    <property type="evidence" value="ECO:0007669"/>
    <property type="project" value="UniProtKB-UniRule"/>
</dbReference>
<dbReference type="CDD" id="cd00773">
    <property type="entry name" value="HisRS-like_core"/>
    <property type="match status" value="1"/>
</dbReference>
<dbReference type="Gene3D" id="3.40.50.800">
    <property type="entry name" value="Anticodon-binding domain"/>
    <property type="match status" value="1"/>
</dbReference>
<dbReference type="Gene3D" id="3.30.930.10">
    <property type="entry name" value="Bira Bifunctional Protein, Domain 2"/>
    <property type="match status" value="1"/>
</dbReference>
<dbReference type="HAMAP" id="MF_00127">
    <property type="entry name" value="His_tRNA_synth"/>
    <property type="match status" value="1"/>
</dbReference>
<dbReference type="InterPro" id="IPR006195">
    <property type="entry name" value="aa-tRNA-synth_II"/>
</dbReference>
<dbReference type="InterPro" id="IPR045864">
    <property type="entry name" value="aa-tRNA-synth_II/BPL/LPL"/>
</dbReference>
<dbReference type="InterPro" id="IPR004154">
    <property type="entry name" value="Anticodon-bd"/>
</dbReference>
<dbReference type="InterPro" id="IPR036621">
    <property type="entry name" value="Anticodon-bd_dom_sf"/>
</dbReference>
<dbReference type="InterPro" id="IPR015807">
    <property type="entry name" value="His-tRNA-ligase"/>
</dbReference>
<dbReference type="InterPro" id="IPR041715">
    <property type="entry name" value="HisRS-like_core"/>
</dbReference>
<dbReference type="InterPro" id="IPR004516">
    <property type="entry name" value="HisRS/HisZ"/>
</dbReference>
<dbReference type="NCBIfam" id="TIGR00442">
    <property type="entry name" value="hisS"/>
    <property type="match status" value="1"/>
</dbReference>
<dbReference type="PANTHER" id="PTHR43707:SF1">
    <property type="entry name" value="HISTIDINE--TRNA LIGASE, MITOCHONDRIAL-RELATED"/>
    <property type="match status" value="1"/>
</dbReference>
<dbReference type="PANTHER" id="PTHR43707">
    <property type="entry name" value="HISTIDYL-TRNA SYNTHETASE"/>
    <property type="match status" value="1"/>
</dbReference>
<dbReference type="Pfam" id="PF03129">
    <property type="entry name" value="HGTP_anticodon"/>
    <property type="match status" value="1"/>
</dbReference>
<dbReference type="Pfam" id="PF13393">
    <property type="entry name" value="tRNA-synt_His"/>
    <property type="match status" value="1"/>
</dbReference>
<dbReference type="PIRSF" id="PIRSF001549">
    <property type="entry name" value="His-tRNA_synth"/>
    <property type="match status" value="1"/>
</dbReference>
<dbReference type="SUPFAM" id="SSF52954">
    <property type="entry name" value="Class II aaRS ABD-related"/>
    <property type="match status" value="1"/>
</dbReference>
<dbReference type="SUPFAM" id="SSF55681">
    <property type="entry name" value="Class II aaRS and biotin synthetases"/>
    <property type="match status" value="1"/>
</dbReference>
<dbReference type="PROSITE" id="PS50862">
    <property type="entry name" value="AA_TRNA_LIGASE_II"/>
    <property type="match status" value="1"/>
</dbReference>
<sequence>MKTNKNKTNIKMIGFYHFFYFVKPYYLLINENVIIFKAKGDFMIQKPRGTQDLFLNNSKEWNAVEEKFRKVLNLFNYGEIITPMFESKELFVRGVGDSSDIVSKEMYEFTDRKGREYVLRPEGTAPTVRALIENKLYIQENLPYKTFYIGPIFRYERPQAGRYRQFNQLGVETFGIDSISHDVELISLGQSFLKELKINKDVIVEMNYLISGNERKEYELELKKYLNLFDDLCSDCEIRINKNVLRVLDCKIDGNKFAEAPKMTLFASQENKERLNKTFDQLKQLGIEAKINFNLVRGLDYYTGLVFEFKNIKTDQAIIAGGSYNNLVEELGGPNLPASGFAIGIERIMMILSDQEIKVADEDELDLFIIPLSDDAQFLTNKLLLEARTANLKVDTNWNIKNLKAGFKSAERLKSKNIVIIGENSINSDIYAIKDQKSGETKELKFKDIVKYLKGEK</sequence>
<keyword id="KW-0030">Aminoacyl-tRNA synthetase</keyword>
<keyword id="KW-0067">ATP-binding</keyword>
<keyword id="KW-0963">Cytoplasm</keyword>
<keyword id="KW-0436">Ligase</keyword>
<keyword id="KW-0547">Nucleotide-binding</keyword>
<keyword id="KW-0648">Protein biosynthesis</keyword>
<keyword id="KW-1185">Reference proteome</keyword>
<accession>Q6F199</accession>
<reference key="1">
    <citation type="submission" date="2004-06" db="EMBL/GenBank/DDBJ databases">
        <authorList>
            <person name="Birren B.W."/>
            <person name="Stange-Thomann N."/>
            <person name="Hafez N."/>
            <person name="DeCaprio D."/>
            <person name="Fisher S."/>
            <person name="Butler J."/>
            <person name="Elkins T."/>
            <person name="Kodira C.D."/>
            <person name="Major J."/>
            <person name="Wang S."/>
            <person name="Nicol R."/>
            <person name="Nusbaum C."/>
        </authorList>
    </citation>
    <scope>NUCLEOTIDE SEQUENCE [LARGE SCALE GENOMIC DNA]</scope>
    <source>
        <strain>ATCC 33453 / NBRC 100688 / NCTC 11704 / L1</strain>
    </source>
</reference>
<feature type="chain" id="PRO_0000136191" description="Histidine--tRNA ligase">
    <location>
        <begin position="1"/>
        <end position="457"/>
    </location>
</feature>
<evidence type="ECO:0000255" key="1">
    <source>
        <dbReference type="HAMAP-Rule" id="MF_00127"/>
    </source>
</evidence>
<gene>
    <name evidence="1" type="primary">hisS</name>
    <name type="ordered locus">Mfl366</name>
</gene>
<comment type="catalytic activity">
    <reaction evidence="1">
        <text>tRNA(His) + L-histidine + ATP = L-histidyl-tRNA(His) + AMP + diphosphate + H(+)</text>
        <dbReference type="Rhea" id="RHEA:17313"/>
        <dbReference type="Rhea" id="RHEA-COMP:9665"/>
        <dbReference type="Rhea" id="RHEA-COMP:9689"/>
        <dbReference type="ChEBI" id="CHEBI:15378"/>
        <dbReference type="ChEBI" id="CHEBI:30616"/>
        <dbReference type="ChEBI" id="CHEBI:33019"/>
        <dbReference type="ChEBI" id="CHEBI:57595"/>
        <dbReference type="ChEBI" id="CHEBI:78442"/>
        <dbReference type="ChEBI" id="CHEBI:78527"/>
        <dbReference type="ChEBI" id="CHEBI:456215"/>
        <dbReference type="EC" id="6.1.1.21"/>
    </reaction>
</comment>
<comment type="subunit">
    <text evidence="1">Homodimer.</text>
</comment>
<comment type="subcellular location">
    <subcellularLocation>
        <location evidence="1">Cytoplasm</location>
    </subcellularLocation>
</comment>
<comment type="similarity">
    <text evidence="1">Belongs to the class-II aminoacyl-tRNA synthetase family.</text>
</comment>
<proteinExistence type="inferred from homology"/>
<organism>
    <name type="scientific">Mesoplasma florum (strain ATCC 33453 / NBRC 100688 / NCTC 11704 / L1)</name>
    <name type="common">Acholeplasma florum</name>
    <dbReference type="NCBI Taxonomy" id="265311"/>
    <lineage>
        <taxon>Bacteria</taxon>
        <taxon>Bacillati</taxon>
        <taxon>Mycoplasmatota</taxon>
        <taxon>Mollicutes</taxon>
        <taxon>Entomoplasmatales</taxon>
        <taxon>Entomoplasmataceae</taxon>
        <taxon>Mesoplasma</taxon>
    </lineage>
</organism>
<protein>
    <recommendedName>
        <fullName evidence="1">Histidine--tRNA ligase</fullName>
        <ecNumber evidence="1">6.1.1.21</ecNumber>
    </recommendedName>
    <alternativeName>
        <fullName evidence="1">Histidyl-tRNA synthetase</fullName>
        <shortName evidence="1">HisRS</shortName>
    </alternativeName>
</protein>